<gene>
    <name type="ordered locus">A1S_1268</name>
</gene>
<protein>
    <recommendedName>
        <fullName evidence="1">Putative hydro-lyase A1S_1268</fullName>
        <ecNumber evidence="1">4.2.1.-</ecNumber>
    </recommendedName>
</protein>
<organism>
    <name type="scientific">Acinetobacter baumannii (strain ATCC 17978 / DSM 105126 / CIP 53.77 / LMG 1025 / NCDC KC755 / 5377)</name>
    <dbReference type="NCBI Taxonomy" id="400667"/>
    <lineage>
        <taxon>Bacteria</taxon>
        <taxon>Pseudomonadati</taxon>
        <taxon>Pseudomonadota</taxon>
        <taxon>Gammaproteobacteria</taxon>
        <taxon>Moraxellales</taxon>
        <taxon>Moraxellaceae</taxon>
        <taxon>Acinetobacter</taxon>
        <taxon>Acinetobacter calcoaceticus/baumannii complex</taxon>
    </lineage>
</organism>
<name>Y1268_ACIBT</name>
<keyword id="KW-0456">Lyase</keyword>
<evidence type="ECO:0000255" key="1">
    <source>
        <dbReference type="HAMAP-Rule" id="MF_01830"/>
    </source>
</evidence>
<reference key="1">
    <citation type="journal article" date="2007" name="Genes Dev.">
        <title>New insights into Acinetobacter baumannii pathogenesis revealed by high-density pyrosequencing and transposon mutagenesis.</title>
        <authorList>
            <person name="Smith M.G."/>
            <person name="Gianoulis T.A."/>
            <person name="Pukatzki S."/>
            <person name="Mekalanos J.J."/>
            <person name="Ornston L.N."/>
            <person name="Gerstein M."/>
            <person name="Snyder M."/>
        </authorList>
    </citation>
    <scope>NUCLEOTIDE SEQUENCE [LARGE SCALE GENOMIC DNA]</scope>
    <source>
        <strain>ATCC 17978 / DSM 105126 / CIP 53.77 / LMG 1025 / NCDC KC755 / 5377</strain>
    </source>
</reference>
<proteinExistence type="inferred from homology"/>
<accession>A3M452</accession>
<sequence length="268" mass="29595">MYKDIKVDPAQLEAALDARLKIRAGFDKPTAGMAAGMTQVNMISVPRDWAYDFLLYAHRNPQSCPVLDVLEEGIYATKLAADSDIRTDFPRYRIWKDGEMVDEVTDAREIYNAHPDLVTFLIGCSFSFETALQEAGIEVRHIHDDTNVPMYLSNIKCEPAGRISGNMVVSMRPIPSHQISEAVKITARMPSVHGAPVHIGHPESLGIKDVNKPDFGDASRIEAGEIPVFWACGVTPQAAVMNSKIPFAISHAPGYMFITDIPDRAWIG</sequence>
<feature type="chain" id="PRO_0000379811" description="Putative hydro-lyase A1S_1268">
    <location>
        <begin position="1"/>
        <end position="268"/>
    </location>
</feature>
<comment type="similarity">
    <text evidence="1">Belongs to the D-glutamate cyclase family.</text>
</comment>
<dbReference type="EC" id="4.2.1.-" evidence="1"/>
<dbReference type="EMBL" id="CP000521">
    <property type="protein sequence ID" value="ABO11696.2"/>
    <property type="molecule type" value="Genomic_DNA"/>
</dbReference>
<dbReference type="RefSeq" id="WP_000276199.1">
    <property type="nucleotide sequence ID" value="NZ_CP053098.1"/>
</dbReference>
<dbReference type="SMR" id="A3M452"/>
<dbReference type="KEGG" id="acb:A1S_1268"/>
<dbReference type="HOGENOM" id="CLU_059759_0_0_6"/>
<dbReference type="GO" id="GO:0016829">
    <property type="term" value="F:lyase activity"/>
    <property type="evidence" value="ECO:0007669"/>
    <property type="project" value="UniProtKB-KW"/>
</dbReference>
<dbReference type="FunFam" id="3.30.2040.10:FF:000001">
    <property type="entry name" value="D-glutamate cyclase, mitochondrial"/>
    <property type="match status" value="1"/>
</dbReference>
<dbReference type="Gene3D" id="3.40.1640.10">
    <property type="entry name" value="PSTPO5379-like"/>
    <property type="match status" value="1"/>
</dbReference>
<dbReference type="Gene3D" id="3.30.2040.10">
    <property type="entry name" value="PSTPO5379-like domain"/>
    <property type="match status" value="1"/>
</dbReference>
<dbReference type="HAMAP" id="MF_01830">
    <property type="entry name" value="Hydro_lyase"/>
    <property type="match status" value="1"/>
</dbReference>
<dbReference type="InterPro" id="IPR009906">
    <property type="entry name" value="D-Glu_cyclase"/>
</dbReference>
<dbReference type="InterPro" id="IPR038021">
    <property type="entry name" value="Putative_hydro-lyase"/>
</dbReference>
<dbReference type="InterPro" id="IPR016938">
    <property type="entry name" value="UPF0317"/>
</dbReference>
<dbReference type="NCBIfam" id="NF003969">
    <property type="entry name" value="PRK05463.1"/>
    <property type="match status" value="1"/>
</dbReference>
<dbReference type="PANTHER" id="PTHR32022">
    <property type="entry name" value="D-GLUTAMATE CYCLASE, MITOCHONDRIAL"/>
    <property type="match status" value="1"/>
</dbReference>
<dbReference type="PANTHER" id="PTHR32022:SF10">
    <property type="entry name" value="D-GLUTAMATE CYCLASE, MITOCHONDRIAL"/>
    <property type="match status" value="1"/>
</dbReference>
<dbReference type="Pfam" id="PF07286">
    <property type="entry name" value="D-Glu_cyclase"/>
    <property type="match status" value="1"/>
</dbReference>
<dbReference type="PIRSF" id="PIRSF029755">
    <property type="entry name" value="UCP029755"/>
    <property type="match status" value="1"/>
</dbReference>
<dbReference type="SUPFAM" id="SSF160920">
    <property type="entry name" value="PSTPO5379-like"/>
    <property type="match status" value="1"/>
</dbReference>